<feature type="chain" id="PRO_1000140240" description="Type III pantothenate kinase">
    <location>
        <begin position="1"/>
        <end position="262"/>
    </location>
</feature>
<feature type="active site" description="Proton acceptor" evidence="1">
    <location>
        <position position="112"/>
    </location>
</feature>
<feature type="binding site" evidence="1">
    <location>
        <begin position="9"/>
        <end position="16"/>
    </location>
    <ligand>
        <name>ATP</name>
        <dbReference type="ChEBI" id="CHEBI:30616"/>
    </ligand>
</feature>
<feature type="binding site" evidence="1">
    <location>
        <position position="103"/>
    </location>
    <ligand>
        <name>substrate</name>
    </ligand>
</feature>
<feature type="binding site" evidence="1">
    <location>
        <begin position="110"/>
        <end position="113"/>
    </location>
    <ligand>
        <name>substrate</name>
    </ligand>
</feature>
<feature type="binding site" evidence="1">
    <location>
        <position position="134"/>
    </location>
    <ligand>
        <name>K(+)</name>
        <dbReference type="ChEBI" id="CHEBI:29103"/>
    </ligand>
</feature>
<feature type="binding site" evidence="1">
    <location>
        <position position="137"/>
    </location>
    <ligand>
        <name>ATP</name>
        <dbReference type="ChEBI" id="CHEBI:30616"/>
    </ligand>
</feature>
<feature type="binding site" evidence="1">
    <location>
        <position position="190"/>
    </location>
    <ligand>
        <name>substrate</name>
    </ligand>
</feature>
<keyword id="KW-0067">ATP-binding</keyword>
<keyword id="KW-0173">Coenzyme A biosynthesis</keyword>
<keyword id="KW-0963">Cytoplasm</keyword>
<keyword id="KW-0418">Kinase</keyword>
<keyword id="KW-0479">Metal-binding</keyword>
<keyword id="KW-0547">Nucleotide-binding</keyword>
<keyword id="KW-0630">Potassium</keyword>
<keyword id="KW-0808">Transferase</keyword>
<proteinExistence type="inferred from homology"/>
<name>COAX_NITV9</name>
<accession>B8DMB1</accession>
<gene>
    <name evidence="1" type="primary">coaX</name>
    <name type="ordered locus">DvMF_1811</name>
</gene>
<evidence type="ECO:0000255" key="1">
    <source>
        <dbReference type="HAMAP-Rule" id="MF_01274"/>
    </source>
</evidence>
<sequence length="262" mass="27882">MTQHFLLFDIGNTNVKIGIAVETAVLTSYVLPTDPGQTTDSIGLRLLEVLRHAGLGPADVGACVASSVVPGVNPLIRRACERYLYRKLLFAPGDIAIPLDNRYERPAEVGADRLVAAYAARRLYPGPRSLVSVDFGTATTFDCVEGGAYLGGLICPGVLSSAGALSSRTAKLPRISLEVEEDSPVIGRSTTTSLNHGFIFGFAAMTEGVLARLNGVLPGPTEVVATGGFARDIARVSSCFDHVRPDLLLQGLRLLYLERDAR</sequence>
<reference key="1">
    <citation type="submission" date="2008-10" db="EMBL/GenBank/DDBJ databases">
        <title>Complete sequence of Desulfovibrio vulgaris str. 'Miyazaki F'.</title>
        <authorList>
            <person name="Lucas S."/>
            <person name="Copeland A."/>
            <person name="Lapidus A."/>
            <person name="Glavina del Rio T."/>
            <person name="Dalin E."/>
            <person name="Tice H."/>
            <person name="Bruce D."/>
            <person name="Goodwin L."/>
            <person name="Pitluck S."/>
            <person name="Sims D."/>
            <person name="Brettin T."/>
            <person name="Detter J.C."/>
            <person name="Han C."/>
            <person name="Larimer F."/>
            <person name="Land M."/>
            <person name="Hauser L."/>
            <person name="Kyrpides N."/>
            <person name="Mikhailova N."/>
            <person name="Hazen T.C."/>
            <person name="Richardson P."/>
        </authorList>
    </citation>
    <scope>NUCLEOTIDE SEQUENCE [LARGE SCALE GENOMIC DNA]</scope>
    <source>
        <strain>DSM 19637 / Miyazaki F</strain>
    </source>
</reference>
<comment type="function">
    <text evidence="1">Catalyzes the phosphorylation of pantothenate (Pan), the first step in CoA biosynthesis.</text>
</comment>
<comment type="catalytic activity">
    <reaction evidence="1">
        <text>(R)-pantothenate + ATP = (R)-4'-phosphopantothenate + ADP + H(+)</text>
        <dbReference type="Rhea" id="RHEA:16373"/>
        <dbReference type="ChEBI" id="CHEBI:10986"/>
        <dbReference type="ChEBI" id="CHEBI:15378"/>
        <dbReference type="ChEBI" id="CHEBI:29032"/>
        <dbReference type="ChEBI" id="CHEBI:30616"/>
        <dbReference type="ChEBI" id="CHEBI:456216"/>
        <dbReference type="EC" id="2.7.1.33"/>
    </reaction>
</comment>
<comment type="cofactor">
    <cofactor evidence="1">
        <name>NH4(+)</name>
        <dbReference type="ChEBI" id="CHEBI:28938"/>
    </cofactor>
    <cofactor evidence="1">
        <name>K(+)</name>
        <dbReference type="ChEBI" id="CHEBI:29103"/>
    </cofactor>
    <text evidence="1">A monovalent cation. Ammonium or potassium.</text>
</comment>
<comment type="pathway">
    <text evidence="1">Cofactor biosynthesis; coenzyme A biosynthesis; CoA from (R)-pantothenate: step 1/5.</text>
</comment>
<comment type="subunit">
    <text evidence="1">Homodimer.</text>
</comment>
<comment type="subcellular location">
    <subcellularLocation>
        <location evidence="1">Cytoplasm</location>
    </subcellularLocation>
</comment>
<comment type="similarity">
    <text evidence="1">Belongs to the type III pantothenate kinase family.</text>
</comment>
<organism>
    <name type="scientific">Nitratidesulfovibrio vulgaris (strain DSM 19637 / Miyazaki F)</name>
    <name type="common">Desulfovibrio vulgaris</name>
    <dbReference type="NCBI Taxonomy" id="883"/>
    <lineage>
        <taxon>Bacteria</taxon>
        <taxon>Pseudomonadati</taxon>
        <taxon>Thermodesulfobacteriota</taxon>
        <taxon>Desulfovibrionia</taxon>
        <taxon>Desulfovibrionales</taxon>
        <taxon>Desulfovibrionaceae</taxon>
        <taxon>Nitratidesulfovibrio</taxon>
    </lineage>
</organism>
<protein>
    <recommendedName>
        <fullName evidence="1">Type III pantothenate kinase</fullName>
        <ecNumber evidence="1">2.7.1.33</ecNumber>
    </recommendedName>
    <alternativeName>
        <fullName evidence="1">PanK-III</fullName>
    </alternativeName>
    <alternativeName>
        <fullName evidence="1">Pantothenic acid kinase</fullName>
    </alternativeName>
</protein>
<dbReference type="EC" id="2.7.1.33" evidence="1"/>
<dbReference type="EMBL" id="CP001197">
    <property type="protein sequence ID" value="ACL08755.1"/>
    <property type="molecule type" value="Genomic_DNA"/>
</dbReference>
<dbReference type="SMR" id="B8DMB1"/>
<dbReference type="STRING" id="883.DvMF_1811"/>
<dbReference type="KEGG" id="dvm:DvMF_1811"/>
<dbReference type="eggNOG" id="COG1521">
    <property type="taxonomic scope" value="Bacteria"/>
</dbReference>
<dbReference type="HOGENOM" id="CLU_066627_1_0_7"/>
<dbReference type="OrthoDB" id="9804707at2"/>
<dbReference type="UniPathway" id="UPA00241">
    <property type="reaction ID" value="UER00352"/>
</dbReference>
<dbReference type="GO" id="GO:0005737">
    <property type="term" value="C:cytoplasm"/>
    <property type="evidence" value="ECO:0007669"/>
    <property type="project" value="UniProtKB-SubCell"/>
</dbReference>
<dbReference type="GO" id="GO:0005524">
    <property type="term" value="F:ATP binding"/>
    <property type="evidence" value="ECO:0007669"/>
    <property type="project" value="UniProtKB-UniRule"/>
</dbReference>
<dbReference type="GO" id="GO:0046872">
    <property type="term" value="F:metal ion binding"/>
    <property type="evidence" value="ECO:0007669"/>
    <property type="project" value="UniProtKB-KW"/>
</dbReference>
<dbReference type="GO" id="GO:0004594">
    <property type="term" value="F:pantothenate kinase activity"/>
    <property type="evidence" value="ECO:0007669"/>
    <property type="project" value="UniProtKB-UniRule"/>
</dbReference>
<dbReference type="GO" id="GO:0015937">
    <property type="term" value="P:coenzyme A biosynthetic process"/>
    <property type="evidence" value="ECO:0007669"/>
    <property type="project" value="UniProtKB-UniRule"/>
</dbReference>
<dbReference type="CDD" id="cd24015">
    <property type="entry name" value="ASKHA_NBD_PanK-III"/>
    <property type="match status" value="1"/>
</dbReference>
<dbReference type="Gene3D" id="3.30.420.40">
    <property type="match status" value="2"/>
</dbReference>
<dbReference type="HAMAP" id="MF_01274">
    <property type="entry name" value="Pantothen_kinase_3"/>
    <property type="match status" value="1"/>
</dbReference>
<dbReference type="InterPro" id="IPR043129">
    <property type="entry name" value="ATPase_NBD"/>
</dbReference>
<dbReference type="InterPro" id="IPR004619">
    <property type="entry name" value="Type_III_PanK"/>
</dbReference>
<dbReference type="NCBIfam" id="TIGR00671">
    <property type="entry name" value="baf"/>
    <property type="match status" value="1"/>
</dbReference>
<dbReference type="NCBIfam" id="NF009855">
    <property type="entry name" value="PRK13321.1"/>
    <property type="match status" value="1"/>
</dbReference>
<dbReference type="PANTHER" id="PTHR34265">
    <property type="entry name" value="TYPE III PANTOTHENATE KINASE"/>
    <property type="match status" value="1"/>
</dbReference>
<dbReference type="PANTHER" id="PTHR34265:SF1">
    <property type="entry name" value="TYPE III PANTOTHENATE KINASE"/>
    <property type="match status" value="1"/>
</dbReference>
<dbReference type="Pfam" id="PF03309">
    <property type="entry name" value="Pan_kinase"/>
    <property type="match status" value="1"/>
</dbReference>
<dbReference type="SUPFAM" id="SSF53067">
    <property type="entry name" value="Actin-like ATPase domain"/>
    <property type="match status" value="2"/>
</dbReference>